<reference key="1">
    <citation type="journal article" date="2006" name="J. Bacteriol.">
        <title>Complete genome sequence of Yersinia pestis strains Antiqua and Nepal516: evidence of gene reduction in an emerging pathogen.</title>
        <authorList>
            <person name="Chain P.S.G."/>
            <person name="Hu P."/>
            <person name="Malfatti S.A."/>
            <person name="Radnedge L."/>
            <person name="Larimer F."/>
            <person name="Vergez L.M."/>
            <person name="Worsham P."/>
            <person name="Chu M.C."/>
            <person name="Andersen G.L."/>
        </authorList>
    </citation>
    <scope>NUCLEOTIDE SEQUENCE [LARGE SCALE GENOMIC DNA]</scope>
    <source>
        <strain>Antiqua</strain>
    </source>
</reference>
<protein>
    <recommendedName>
        <fullName evidence="1">Potassium-transporting ATPase ATP-binding subunit</fullName>
        <ecNumber evidence="1">7.2.2.6</ecNumber>
    </recommendedName>
    <alternativeName>
        <fullName evidence="1">ATP phosphohydrolase [potassium-transporting] B chain</fullName>
    </alternativeName>
    <alternativeName>
        <fullName evidence="1">Potassium-binding and translocating subunit B</fullName>
    </alternativeName>
    <alternativeName>
        <fullName evidence="1">Potassium-translocating ATPase B chain</fullName>
    </alternativeName>
</protein>
<organism>
    <name type="scientific">Yersinia pestis bv. Antiqua (strain Antiqua)</name>
    <dbReference type="NCBI Taxonomy" id="360102"/>
    <lineage>
        <taxon>Bacteria</taxon>
        <taxon>Pseudomonadati</taxon>
        <taxon>Pseudomonadota</taxon>
        <taxon>Gammaproteobacteria</taxon>
        <taxon>Enterobacterales</taxon>
        <taxon>Yersiniaceae</taxon>
        <taxon>Yersinia</taxon>
    </lineage>
</organism>
<proteinExistence type="inferred from homology"/>
<keyword id="KW-0067">ATP-binding</keyword>
<keyword id="KW-0997">Cell inner membrane</keyword>
<keyword id="KW-1003">Cell membrane</keyword>
<keyword id="KW-0406">Ion transport</keyword>
<keyword id="KW-0460">Magnesium</keyword>
<keyword id="KW-0472">Membrane</keyword>
<keyword id="KW-0479">Metal-binding</keyword>
<keyword id="KW-0547">Nucleotide-binding</keyword>
<keyword id="KW-0597">Phosphoprotein</keyword>
<keyword id="KW-0630">Potassium</keyword>
<keyword id="KW-0633">Potassium transport</keyword>
<keyword id="KW-1278">Translocase</keyword>
<keyword id="KW-0812">Transmembrane</keyword>
<keyword id="KW-1133">Transmembrane helix</keyword>
<keyword id="KW-0813">Transport</keyword>
<gene>
    <name evidence="1" type="primary">kdpB</name>
    <name type="ordered locus">YPA_2421</name>
</gene>
<dbReference type="EC" id="7.2.2.6" evidence="1"/>
<dbReference type="EMBL" id="CP000308">
    <property type="protein sequence ID" value="ABG14386.1"/>
    <property type="molecule type" value="Genomic_DNA"/>
</dbReference>
<dbReference type="RefSeq" id="WP_002209651.1">
    <property type="nucleotide sequence ID" value="NZ_CP009906.1"/>
</dbReference>
<dbReference type="SMR" id="Q1C586"/>
<dbReference type="GeneID" id="57976002"/>
<dbReference type="KEGG" id="ypa:YPA_2421"/>
<dbReference type="Proteomes" id="UP000001971">
    <property type="component" value="Chromosome"/>
</dbReference>
<dbReference type="GO" id="GO:0005886">
    <property type="term" value="C:plasma membrane"/>
    <property type="evidence" value="ECO:0007669"/>
    <property type="project" value="UniProtKB-SubCell"/>
</dbReference>
<dbReference type="GO" id="GO:0005524">
    <property type="term" value="F:ATP binding"/>
    <property type="evidence" value="ECO:0007669"/>
    <property type="project" value="UniProtKB-UniRule"/>
</dbReference>
<dbReference type="GO" id="GO:0016887">
    <property type="term" value="F:ATP hydrolysis activity"/>
    <property type="evidence" value="ECO:0007669"/>
    <property type="project" value="InterPro"/>
</dbReference>
<dbReference type="GO" id="GO:0000287">
    <property type="term" value="F:magnesium ion binding"/>
    <property type="evidence" value="ECO:0007669"/>
    <property type="project" value="UniProtKB-UniRule"/>
</dbReference>
<dbReference type="GO" id="GO:0008556">
    <property type="term" value="F:P-type potassium transmembrane transporter activity"/>
    <property type="evidence" value="ECO:0007669"/>
    <property type="project" value="UniProtKB-UniRule"/>
</dbReference>
<dbReference type="CDD" id="cd02078">
    <property type="entry name" value="P-type_ATPase_K"/>
    <property type="match status" value="1"/>
</dbReference>
<dbReference type="FunFam" id="2.70.150.10:FF:000010">
    <property type="entry name" value="Potassium-transporting ATPase ATP-binding subunit"/>
    <property type="match status" value="1"/>
</dbReference>
<dbReference type="FunFam" id="3.40.1110.10:FF:000007">
    <property type="entry name" value="Potassium-transporting ATPase ATP-binding subunit"/>
    <property type="match status" value="1"/>
</dbReference>
<dbReference type="Gene3D" id="3.40.1110.10">
    <property type="entry name" value="Calcium-transporting ATPase, cytoplasmic domain N"/>
    <property type="match status" value="1"/>
</dbReference>
<dbReference type="Gene3D" id="2.70.150.10">
    <property type="entry name" value="Calcium-transporting ATPase, cytoplasmic transduction domain A"/>
    <property type="match status" value="1"/>
</dbReference>
<dbReference type="Gene3D" id="3.40.50.1000">
    <property type="entry name" value="HAD superfamily/HAD-like"/>
    <property type="match status" value="1"/>
</dbReference>
<dbReference type="HAMAP" id="MF_00285">
    <property type="entry name" value="KdpB"/>
    <property type="match status" value="1"/>
</dbReference>
<dbReference type="InterPro" id="IPR023299">
    <property type="entry name" value="ATPase_P-typ_cyto_dom_N"/>
</dbReference>
<dbReference type="InterPro" id="IPR018303">
    <property type="entry name" value="ATPase_P-typ_P_site"/>
</dbReference>
<dbReference type="InterPro" id="IPR023298">
    <property type="entry name" value="ATPase_P-typ_TM_dom_sf"/>
</dbReference>
<dbReference type="InterPro" id="IPR008250">
    <property type="entry name" value="ATPase_P-typ_transduc_dom_A_sf"/>
</dbReference>
<dbReference type="InterPro" id="IPR036412">
    <property type="entry name" value="HAD-like_sf"/>
</dbReference>
<dbReference type="InterPro" id="IPR023214">
    <property type="entry name" value="HAD_sf"/>
</dbReference>
<dbReference type="InterPro" id="IPR006391">
    <property type="entry name" value="P-type_ATPase_bsu_IA"/>
</dbReference>
<dbReference type="InterPro" id="IPR001757">
    <property type="entry name" value="P_typ_ATPase"/>
</dbReference>
<dbReference type="InterPro" id="IPR044492">
    <property type="entry name" value="P_typ_ATPase_HD_dom"/>
</dbReference>
<dbReference type="NCBIfam" id="TIGR01494">
    <property type="entry name" value="ATPase_P-type"/>
    <property type="match status" value="2"/>
</dbReference>
<dbReference type="NCBIfam" id="TIGR01497">
    <property type="entry name" value="kdpB"/>
    <property type="match status" value="1"/>
</dbReference>
<dbReference type="PANTHER" id="PTHR43743">
    <property type="entry name" value="POTASSIUM-TRANSPORTING ATPASE ATP-BINDING SUBUNIT"/>
    <property type="match status" value="1"/>
</dbReference>
<dbReference type="PANTHER" id="PTHR43743:SF1">
    <property type="entry name" value="POTASSIUM-TRANSPORTING ATPASE ATP-BINDING SUBUNIT"/>
    <property type="match status" value="1"/>
</dbReference>
<dbReference type="Pfam" id="PF00122">
    <property type="entry name" value="E1-E2_ATPase"/>
    <property type="match status" value="1"/>
</dbReference>
<dbReference type="Pfam" id="PF00702">
    <property type="entry name" value="Hydrolase"/>
    <property type="match status" value="1"/>
</dbReference>
<dbReference type="PRINTS" id="PR00119">
    <property type="entry name" value="CATATPASE"/>
</dbReference>
<dbReference type="SFLD" id="SFLDG00002">
    <property type="entry name" value="C1.7:_P-type_atpase_like"/>
    <property type="match status" value="1"/>
</dbReference>
<dbReference type="SFLD" id="SFLDF00027">
    <property type="entry name" value="p-type_atpase"/>
    <property type="match status" value="1"/>
</dbReference>
<dbReference type="SUPFAM" id="SSF81653">
    <property type="entry name" value="Calcium ATPase, transduction domain A"/>
    <property type="match status" value="1"/>
</dbReference>
<dbReference type="SUPFAM" id="SSF81665">
    <property type="entry name" value="Calcium ATPase, transmembrane domain M"/>
    <property type="match status" value="1"/>
</dbReference>
<dbReference type="SUPFAM" id="SSF56784">
    <property type="entry name" value="HAD-like"/>
    <property type="match status" value="1"/>
</dbReference>
<dbReference type="SUPFAM" id="SSF81660">
    <property type="entry name" value="Metal cation-transporting ATPase, ATP-binding domain N"/>
    <property type="match status" value="1"/>
</dbReference>
<dbReference type="PROSITE" id="PS00154">
    <property type="entry name" value="ATPASE_E1_E2"/>
    <property type="match status" value="1"/>
</dbReference>
<comment type="function">
    <text evidence="1">Part of the high-affinity ATP-driven potassium transport (or Kdp) system, which catalyzes the hydrolysis of ATP coupled with the electrogenic transport of potassium into the cytoplasm. This subunit is responsible for energy coupling to the transport system and for the release of the potassium ions to the cytoplasm.</text>
</comment>
<comment type="catalytic activity">
    <reaction evidence="1">
        <text>K(+)(out) + ATP + H2O = K(+)(in) + ADP + phosphate + H(+)</text>
        <dbReference type="Rhea" id="RHEA:16777"/>
        <dbReference type="ChEBI" id="CHEBI:15377"/>
        <dbReference type="ChEBI" id="CHEBI:15378"/>
        <dbReference type="ChEBI" id="CHEBI:29103"/>
        <dbReference type="ChEBI" id="CHEBI:30616"/>
        <dbReference type="ChEBI" id="CHEBI:43474"/>
        <dbReference type="ChEBI" id="CHEBI:456216"/>
        <dbReference type="EC" id="7.2.2.6"/>
    </reaction>
    <physiologicalReaction direction="left-to-right" evidence="1">
        <dbReference type="Rhea" id="RHEA:16778"/>
    </physiologicalReaction>
</comment>
<comment type="subunit">
    <text evidence="1">The system is composed of three essential subunits: KdpA, KdpB and KdpC.</text>
</comment>
<comment type="subcellular location">
    <subcellularLocation>
        <location evidence="1">Cell inner membrane</location>
        <topology evidence="1">Multi-pass membrane protein</topology>
    </subcellularLocation>
</comment>
<comment type="similarity">
    <text evidence="1">Belongs to the cation transport ATPase (P-type) (TC 3.A.3) family. Type IA subfamily.</text>
</comment>
<sequence length="688" mass="72962">MTHKQRAIFEPALVRTALLDAVKKLDPRVQWRNPVMFVVYLGSWLTTLIWLDILSGHTTGSAMFTGSIALWLWFTVLFANMAEALAEGRSKAQAASLRGVKKTSWAKKLSEARVDAPQEKVSADSLRKGDLVLIEAGDTVPCDGEVLEGGASVDESAITGESAPVIRESGGDFSSVTGGTRVLSDWLVVECRVNPGETFLDRMIAMVEGAKRRKTPNEVALTILLVALTIVFLLATATLYPFSVFSVEASQAGSPVTITVLVALLVCLIPTTIGGLLSAIGVAGMSRMLGANVIATSGRAVEAAGDVDVLLLDKTGTITLGNRQASEFLPAPGVTEQQLADAAQLSSLADETPEGRSIVVLAKQRFNLRERDLHSLNATFIPFSAQTRMSGVNVQERMIRKGAVDAIRRHVESNQGHFPPAVDDLVASVARTGGTPLVVAEGSRVLGVVALKDIVKGGIKERFAELRKMGIKTVMITGDNRLTAAAIAAEAGVDDFLAEATPEAKLALIRQYQAEGRLVAMTGDGTNDAPALAQADVAVAMNSGTQAAKEAGNMVDLDSNPTKLIEVVHIGKQMLMTRGSLTTFSIANDVAKYFAIIPAAFAATYPQLNALNIMQLHSPSSAILSAVIFNALVIVFLIPLALKGVSYKAMSAAALLRRNLWIYGLGGLLVPFVGIKLIDLLLTALNMG</sequence>
<feature type="chain" id="PRO_1000022450" description="Potassium-transporting ATPase ATP-binding subunit">
    <location>
        <begin position="1"/>
        <end position="688"/>
    </location>
</feature>
<feature type="transmembrane region" description="Helical" evidence="1">
    <location>
        <begin position="34"/>
        <end position="54"/>
    </location>
</feature>
<feature type="transmembrane region" description="Helical" evidence="1">
    <location>
        <begin position="62"/>
        <end position="82"/>
    </location>
</feature>
<feature type="transmembrane region" description="Helical" evidence="1">
    <location>
        <begin position="219"/>
        <end position="239"/>
    </location>
</feature>
<feature type="transmembrane region" description="Helical" evidence="1">
    <location>
        <begin position="260"/>
        <end position="280"/>
    </location>
</feature>
<feature type="transmembrane region" description="Helical" evidence="1">
    <location>
        <begin position="594"/>
        <end position="614"/>
    </location>
</feature>
<feature type="transmembrane region" description="Helical" evidence="1">
    <location>
        <begin position="622"/>
        <end position="642"/>
    </location>
</feature>
<feature type="transmembrane region" description="Helical" evidence="1">
    <location>
        <begin position="662"/>
        <end position="682"/>
    </location>
</feature>
<feature type="active site" description="4-aspartylphosphate intermediate" evidence="1">
    <location>
        <position position="313"/>
    </location>
</feature>
<feature type="binding site" evidence="1">
    <location>
        <position position="350"/>
    </location>
    <ligand>
        <name>ATP</name>
        <dbReference type="ChEBI" id="CHEBI:30616"/>
    </ligand>
</feature>
<feature type="binding site" evidence="1">
    <location>
        <position position="354"/>
    </location>
    <ligand>
        <name>ATP</name>
        <dbReference type="ChEBI" id="CHEBI:30616"/>
    </ligand>
</feature>
<feature type="binding site" evidence="1">
    <location>
        <begin position="383"/>
        <end position="390"/>
    </location>
    <ligand>
        <name>ATP</name>
        <dbReference type="ChEBI" id="CHEBI:30616"/>
    </ligand>
</feature>
<feature type="binding site" evidence="1">
    <location>
        <position position="401"/>
    </location>
    <ligand>
        <name>ATP</name>
        <dbReference type="ChEBI" id="CHEBI:30616"/>
    </ligand>
</feature>
<feature type="binding site" evidence="1">
    <location>
        <position position="524"/>
    </location>
    <ligand>
        <name>Mg(2+)</name>
        <dbReference type="ChEBI" id="CHEBI:18420"/>
    </ligand>
</feature>
<feature type="binding site" evidence="1">
    <location>
        <position position="528"/>
    </location>
    <ligand>
        <name>Mg(2+)</name>
        <dbReference type="ChEBI" id="CHEBI:18420"/>
    </ligand>
</feature>
<accession>Q1C586</accession>
<name>KDPB_YERPA</name>
<evidence type="ECO:0000255" key="1">
    <source>
        <dbReference type="HAMAP-Rule" id="MF_00285"/>
    </source>
</evidence>